<organism>
    <name type="scientific">Pseudoalteromonas translucida (strain TAC 125)</name>
    <dbReference type="NCBI Taxonomy" id="326442"/>
    <lineage>
        <taxon>Bacteria</taxon>
        <taxon>Pseudomonadati</taxon>
        <taxon>Pseudomonadota</taxon>
        <taxon>Gammaproteobacteria</taxon>
        <taxon>Alteromonadales</taxon>
        <taxon>Pseudoalteromonadaceae</taxon>
        <taxon>Pseudoalteromonas</taxon>
    </lineage>
</organism>
<gene>
    <name evidence="1" type="primary">epd</name>
    <name type="ordered locus">PSHAa0594</name>
</gene>
<protein>
    <recommendedName>
        <fullName evidence="1">D-erythrose-4-phosphate dehydrogenase</fullName>
        <shortName evidence="1">E4PDH</shortName>
        <ecNumber evidence="1">1.2.1.72</ecNumber>
    </recommendedName>
</protein>
<accession>Q3ILL8</accession>
<evidence type="ECO:0000255" key="1">
    <source>
        <dbReference type="HAMAP-Rule" id="MF_01640"/>
    </source>
</evidence>
<dbReference type="EC" id="1.2.1.72" evidence="1"/>
<dbReference type="EMBL" id="CR954246">
    <property type="protein sequence ID" value="CAI85680.1"/>
    <property type="molecule type" value="Genomic_DNA"/>
</dbReference>
<dbReference type="SMR" id="Q3ILL8"/>
<dbReference type="STRING" id="326442.PSHAa0594"/>
<dbReference type="KEGG" id="pha:PSHAa0594"/>
<dbReference type="PATRIC" id="fig|326442.8.peg.559"/>
<dbReference type="eggNOG" id="COG0057">
    <property type="taxonomic scope" value="Bacteria"/>
</dbReference>
<dbReference type="HOGENOM" id="CLU_030140_0_0_6"/>
<dbReference type="BioCyc" id="PHAL326442:PSHA_RS02915-MONOMER"/>
<dbReference type="UniPathway" id="UPA00244">
    <property type="reaction ID" value="UER00309"/>
</dbReference>
<dbReference type="Proteomes" id="UP000006843">
    <property type="component" value="Chromosome I"/>
</dbReference>
<dbReference type="GO" id="GO:0005737">
    <property type="term" value="C:cytoplasm"/>
    <property type="evidence" value="ECO:0007669"/>
    <property type="project" value="UniProtKB-SubCell"/>
</dbReference>
<dbReference type="GO" id="GO:0048001">
    <property type="term" value="F:erythrose-4-phosphate dehydrogenase activity"/>
    <property type="evidence" value="ECO:0007669"/>
    <property type="project" value="UniProtKB-UniRule"/>
</dbReference>
<dbReference type="GO" id="GO:0051287">
    <property type="term" value="F:NAD binding"/>
    <property type="evidence" value="ECO:0007669"/>
    <property type="project" value="InterPro"/>
</dbReference>
<dbReference type="GO" id="GO:0050661">
    <property type="term" value="F:NADP binding"/>
    <property type="evidence" value="ECO:0007669"/>
    <property type="project" value="InterPro"/>
</dbReference>
<dbReference type="GO" id="GO:0006006">
    <property type="term" value="P:glucose metabolic process"/>
    <property type="evidence" value="ECO:0007669"/>
    <property type="project" value="InterPro"/>
</dbReference>
<dbReference type="GO" id="GO:0042823">
    <property type="term" value="P:pyridoxal phosphate biosynthetic process"/>
    <property type="evidence" value="ECO:0007669"/>
    <property type="project" value="UniProtKB-UniRule"/>
</dbReference>
<dbReference type="GO" id="GO:0008615">
    <property type="term" value="P:pyridoxine biosynthetic process"/>
    <property type="evidence" value="ECO:0007669"/>
    <property type="project" value="UniProtKB-UniRule"/>
</dbReference>
<dbReference type="CDD" id="cd23937">
    <property type="entry name" value="GAPDH_C_E4PDH"/>
    <property type="match status" value="1"/>
</dbReference>
<dbReference type="CDD" id="cd17892">
    <property type="entry name" value="GAPDH_N_E4PDH"/>
    <property type="match status" value="1"/>
</dbReference>
<dbReference type="FunFam" id="3.30.360.10:FF:000007">
    <property type="entry name" value="D-erythrose-4-phosphate dehydrogenase"/>
    <property type="match status" value="1"/>
</dbReference>
<dbReference type="FunFam" id="3.40.50.720:FF:000001">
    <property type="entry name" value="Glyceraldehyde-3-phosphate dehydrogenase"/>
    <property type="match status" value="1"/>
</dbReference>
<dbReference type="Gene3D" id="3.30.360.10">
    <property type="entry name" value="Dihydrodipicolinate Reductase, domain 2"/>
    <property type="match status" value="1"/>
</dbReference>
<dbReference type="Gene3D" id="3.40.50.720">
    <property type="entry name" value="NAD(P)-binding Rossmann-like Domain"/>
    <property type="match status" value="1"/>
</dbReference>
<dbReference type="HAMAP" id="MF_01640">
    <property type="entry name" value="E4P_dehydrog"/>
    <property type="match status" value="1"/>
</dbReference>
<dbReference type="InterPro" id="IPR006422">
    <property type="entry name" value="E4P_DH_bac"/>
</dbReference>
<dbReference type="InterPro" id="IPR020831">
    <property type="entry name" value="GlycerAld/Erythrose_P_DH"/>
</dbReference>
<dbReference type="InterPro" id="IPR020829">
    <property type="entry name" value="GlycerAld_3-P_DH_cat"/>
</dbReference>
<dbReference type="InterPro" id="IPR020828">
    <property type="entry name" value="GlycerAld_3-P_DH_NAD(P)-bd"/>
</dbReference>
<dbReference type="InterPro" id="IPR006424">
    <property type="entry name" value="Glyceraldehyde-3-P_DH_1"/>
</dbReference>
<dbReference type="InterPro" id="IPR036291">
    <property type="entry name" value="NAD(P)-bd_dom_sf"/>
</dbReference>
<dbReference type="NCBIfam" id="TIGR01532">
    <property type="entry name" value="E4PD_g-proteo"/>
    <property type="match status" value="1"/>
</dbReference>
<dbReference type="NCBIfam" id="TIGR01534">
    <property type="entry name" value="GAPDH-I"/>
    <property type="match status" value="1"/>
</dbReference>
<dbReference type="NCBIfam" id="NF010058">
    <property type="entry name" value="PRK13535.1"/>
    <property type="match status" value="1"/>
</dbReference>
<dbReference type="PANTHER" id="PTHR43148">
    <property type="entry name" value="GLYCERALDEHYDE-3-PHOSPHATE DEHYDROGENASE 2"/>
    <property type="match status" value="1"/>
</dbReference>
<dbReference type="Pfam" id="PF02800">
    <property type="entry name" value="Gp_dh_C"/>
    <property type="match status" value="1"/>
</dbReference>
<dbReference type="Pfam" id="PF00044">
    <property type="entry name" value="Gp_dh_N"/>
    <property type="match status" value="1"/>
</dbReference>
<dbReference type="PIRSF" id="PIRSF000149">
    <property type="entry name" value="GAP_DH"/>
    <property type="match status" value="1"/>
</dbReference>
<dbReference type="PRINTS" id="PR00078">
    <property type="entry name" value="G3PDHDRGNASE"/>
</dbReference>
<dbReference type="SMART" id="SM00846">
    <property type="entry name" value="Gp_dh_N"/>
    <property type="match status" value="1"/>
</dbReference>
<dbReference type="SUPFAM" id="SSF55347">
    <property type="entry name" value="Glyceraldehyde-3-phosphate dehydrogenase-like, C-terminal domain"/>
    <property type="match status" value="1"/>
</dbReference>
<dbReference type="SUPFAM" id="SSF51735">
    <property type="entry name" value="NAD(P)-binding Rossmann-fold domains"/>
    <property type="match status" value="1"/>
</dbReference>
<comment type="function">
    <text evidence="1">Catalyzes the NAD-dependent conversion of D-erythrose 4-phosphate to 4-phosphoerythronate.</text>
</comment>
<comment type="catalytic activity">
    <reaction evidence="1">
        <text>D-erythrose 4-phosphate + NAD(+) + H2O = 4-phospho-D-erythronate + NADH + 2 H(+)</text>
        <dbReference type="Rhea" id="RHEA:12056"/>
        <dbReference type="ChEBI" id="CHEBI:15377"/>
        <dbReference type="ChEBI" id="CHEBI:15378"/>
        <dbReference type="ChEBI" id="CHEBI:16897"/>
        <dbReference type="ChEBI" id="CHEBI:57540"/>
        <dbReference type="ChEBI" id="CHEBI:57945"/>
        <dbReference type="ChEBI" id="CHEBI:58766"/>
        <dbReference type="EC" id="1.2.1.72"/>
    </reaction>
</comment>
<comment type="pathway">
    <text evidence="1">Cofactor biosynthesis; pyridoxine 5'-phosphate biosynthesis; pyridoxine 5'-phosphate from D-erythrose 4-phosphate: step 1/5.</text>
</comment>
<comment type="subunit">
    <text evidence="1">Homotetramer.</text>
</comment>
<comment type="subcellular location">
    <subcellularLocation>
        <location evidence="1">Cytoplasm</location>
    </subcellularLocation>
</comment>
<comment type="similarity">
    <text evidence="1">Belongs to the glyceraldehyde-3-phosphate dehydrogenase family. Epd subfamily.</text>
</comment>
<name>E4PD_PSET1</name>
<reference key="1">
    <citation type="journal article" date="2005" name="Genome Res.">
        <title>Coping with cold: the genome of the versatile marine Antarctica bacterium Pseudoalteromonas haloplanktis TAC125.</title>
        <authorList>
            <person name="Medigue C."/>
            <person name="Krin E."/>
            <person name="Pascal G."/>
            <person name="Barbe V."/>
            <person name="Bernsel A."/>
            <person name="Bertin P.N."/>
            <person name="Cheung F."/>
            <person name="Cruveiller S."/>
            <person name="D'Amico S."/>
            <person name="Duilio A."/>
            <person name="Fang G."/>
            <person name="Feller G."/>
            <person name="Ho C."/>
            <person name="Mangenot S."/>
            <person name="Marino G."/>
            <person name="Nilsson J."/>
            <person name="Parrilli E."/>
            <person name="Rocha E.P.C."/>
            <person name="Rouy Z."/>
            <person name="Sekowska A."/>
            <person name="Tutino M.L."/>
            <person name="Vallenet D."/>
            <person name="von Heijne G."/>
            <person name="Danchin A."/>
        </authorList>
    </citation>
    <scope>NUCLEOTIDE SEQUENCE [LARGE SCALE GENOMIC DNA]</scope>
    <source>
        <strain>TAC 125</strain>
    </source>
</reference>
<sequence length="343" mass="37604">MAIKLAINGFGRIGRNIVRALYESGLSNEIKIVAINELADPEAIAHLLKYDTSHGRFFFPVKLGEDTISVAGDAIALFCEPNPAELPWKTLGVDVVLECTGVYHSREHAQLHLTAGAKKVLFSHPADNDVDATIVYGINDDELKPEHTIVSNGSCTTNCVVPVIKVLDDAFGIESGAITTIHASMNDQPVIDAYHHDLRRTRAASQSIIPVDTKLARGIDRILPKFKGRFEAIAVRVPTINVTAMDLSVTVNTDVDLNAVNNALKAQAKDRLEGILSYTAEPLVSIDFNHDPHSCIIDGTQTRVSHKRLIKLLVWCDNEWGFANRMLDTARAMVALEKITNIK</sequence>
<proteinExistence type="inferred from homology"/>
<feature type="chain" id="PRO_0000293154" description="D-erythrose-4-phosphate dehydrogenase">
    <location>
        <begin position="1"/>
        <end position="343"/>
    </location>
</feature>
<feature type="active site" description="Nucleophile" evidence="1">
    <location>
        <position position="155"/>
    </location>
</feature>
<feature type="binding site" evidence="1">
    <location>
        <begin position="12"/>
        <end position="13"/>
    </location>
    <ligand>
        <name>NAD(+)</name>
        <dbReference type="ChEBI" id="CHEBI:57540"/>
    </ligand>
</feature>
<feature type="binding site" evidence="1">
    <location>
        <begin position="154"/>
        <end position="156"/>
    </location>
    <ligand>
        <name>substrate</name>
    </ligand>
</feature>
<feature type="binding site" evidence="1">
    <location>
        <position position="200"/>
    </location>
    <ligand>
        <name>substrate</name>
    </ligand>
</feature>
<feature type="binding site" evidence="1">
    <location>
        <begin position="213"/>
        <end position="214"/>
    </location>
    <ligand>
        <name>substrate</name>
    </ligand>
</feature>
<feature type="binding site" evidence="1">
    <location>
        <position position="236"/>
    </location>
    <ligand>
        <name>substrate</name>
    </ligand>
</feature>
<feature type="binding site" evidence="1">
    <location>
        <position position="318"/>
    </location>
    <ligand>
        <name>NAD(+)</name>
        <dbReference type="ChEBI" id="CHEBI:57540"/>
    </ligand>
</feature>
<feature type="site" description="Activates thiol group during catalysis" evidence="1">
    <location>
        <position position="182"/>
    </location>
</feature>
<keyword id="KW-0963">Cytoplasm</keyword>
<keyword id="KW-0520">NAD</keyword>
<keyword id="KW-0560">Oxidoreductase</keyword>
<keyword id="KW-0664">Pyridoxine biosynthesis</keyword>
<keyword id="KW-1185">Reference proteome</keyword>